<protein>
    <recommendedName>
        <fullName>Dual specificity protein kinase splA</fullName>
        <ecNumber>2.7.10.2</ecNumber>
    </recommendedName>
    <alternativeName>
        <fullName>Non-receptor tyrosine kinase spore lysis A</fullName>
    </alternativeName>
    <alternativeName>
        <fullName>Tyrosine-protein kinase 1</fullName>
    </alternativeName>
</protein>
<keyword id="KW-0067">ATP-binding</keyword>
<keyword id="KW-0418">Kinase</keyword>
<keyword id="KW-0547">Nucleotide-binding</keyword>
<keyword id="KW-0597">Phosphoprotein</keyword>
<keyword id="KW-1185">Reference proteome</keyword>
<keyword id="KW-0677">Repeat</keyword>
<keyword id="KW-0808">Transferase</keyword>
<keyword id="KW-0829">Tyrosine-protein kinase</keyword>
<name>SPLA_DICDI</name>
<accession>P18160</accession>
<accession>Q54R51</accession>
<evidence type="ECO:0000255" key="1">
    <source>
        <dbReference type="PROSITE-ProRule" id="PRU00159"/>
    </source>
</evidence>
<evidence type="ECO:0000255" key="2">
    <source>
        <dbReference type="PROSITE-ProRule" id="PRU00184"/>
    </source>
</evidence>
<evidence type="ECO:0000255" key="3">
    <source>
        <dbReference type="PROSITE-ProRule" id="PRU00548"/>
    </source>
</evidence>
<evidence type="ECO:0000255" key="4">
    <source>
        <dbReference type="PROSITE-ProRule" id="PRU10028"/>
    </source>
</evidence>
<evidence type="ECO:0000256" key="5">
    <source>
        <dbReference type="SAM" id="MobiDB-lite"/>
    </source>
</evidence>
<evidence type="ECO:0000269" key="6">
    <source>
    </source>
</evidence>
<evidence type="ECO:0000305" key="7"/>
<sequence>MNSKNDLFIGFFFFFYNYYYYYNNNNNNNNNNNNNNNNNNNNNNNNNNNNNNIYIIVIIGLDPQQNHPSLKIPPPPSPTSPYVRRHARQHSRSNSSNSPGELTGGVEIIQQQNSINTQTSPPTSTSPNTVPPPPPTNTTTSSTTITRNSNNINNSNGGIINSSSGSNINNSSSSGVINTNINNSGGNISPTSNSLPSSNNNILYTSSGSNSGNNNNNNNTINISSGSSGINNSSNSNINNNNNNNSSSSSGIHASGSLTAIPTNTNSNSSIFHSSNSVNRINKSNYSADSLVLPPNRISQVPQSQTQPQLQISPSTSFSSQQQQQQQLQQQLQLQQQLQQQIQQQQQIQQQQNLHFTYSKTFTSGQPNTLVNLSSPPPQSKHLHVSSDHSFFNEVLTPTPVIHNSTNQNNQLLFGDSDPLSFLEYNNFINRYQPALKNNQPVSSYRQQQQIQHQIQLQQIQQQQQQQQQIQQQQLQQQQQIQQQQIQQQQQQIQQQQQQQQQQQQQQQQLQQIQPPPTIQPPPQQTTPTLRGNRSSGNLSGLNSFSLKQSTDSLTPPPNSQQSTVSSNSTPIAATPISPLTAPTSPPPPPPPPTNFNSKFNNNNNNNINNSSNNNTTVPPSPPPIIVLPKSPSSRSPRPASAPVPSAPFLVNNRVINTSSSSNISTNNTDLNLSSSSSSSPPLNISTASPSKSEDSPPTVSPSYKQQQQQQQQQQQQQQQLNNSSNSSYSPKPRSPSVSSPPPSSISPNSSPIGSPNISFHHHQQHQIPPPPPVLSNTNNNNNNNNNNNNNNNNNNNNNNNNNNNNNNNNNTNHTNKKEGDSSWFNMSFKFFKKKLVPSNEYRWDLRKSNSLTLNIEDKSRCSYRLPTSGSKGIAKSTQPFSSSFTYFELFITNGNGDKICFGLTTNDHPIEVYPGNYQGSYGYSGDGKCYFGTNEGRVYGPSFSSGDVVGCGYDSSSKTLYFTKNGVYLGVAAQKVNLIGLYPTVGLQNPGESVVINFFGPFSYRGAPEKPSKQSTIKDSGGSSIIPSEDLIPKEEFEVCRWSEKKNYHGKHVVVRNRTAFLPLDSPKDTIGGVRATQPFGEGFCYFEVIIDQLDKGQLSIGLANLEYPTFYHVGWMPRSYGYHNDDGRKFRWREEPGVNEGESYGSSYKKGDIIGCGLSFTSREIFFTKNGMYLGTAFSNVYGVFYPSVAFNEPGISITGVFGPPFKFSQVTLMLKNVNSTSILVPNGNNNNNSNNNNNNNNNNIIGNGKITTTTTTSTSPSSINNNEDISSNNNNNNNNNNNNNNNNNNNNNNNNNNNNNNSNSSNTNNNNINNTTNNNNSNSNNNNNNNNSNSNSNSNNNNINNNNNNNNNNNNIYLTKKPSIGSTDESSTGSLGGNNSSGNNNSSSGSIGNNSSIIKQRSPPHSINGPLMLPPSSTNNNNNIYSSYNSTTAGSSTTILPTLNHPIFGNTTSNNNSSSTLSVGGNNNLLGRHCQSLPITASTNHTLSSSLGVSFSSPSSSPKTSPRKIVNSSEDLGFVQTFQDQDGQPPSAWRRCGKSIKTKDDITLTIIKKKTSVAMADRPFSSNSSSTICYFEVYLEGHDKKGSITVGLSHSTYPFIKHIGREPKSYGFSSEGEKYGGSEIGEPYGPFFFFDGDSIASSCVIGCGINTSTRDIFFTKNGHYLGVAFSRVTSDPLYPSISFRGVVGGLCVATFPGGHFRFNIEDLPGISPSVWTEALGPDRQGSGFKNWAPNDVAIWLESFNYGQYRKNFRDNNISGRHLEGITHAMLKNDLGIEPYGHREDIINRLNRMIQIWNDKSPDSYPKIAIDSSDKIRWPASGGSSGGINISGGVVIGSSSGSDDGITEISSSSKNIRPYKSYTQKEIEDRNRRSTISGGEKKNKYYIDNQMDPHQIGSMDSDGLLPDFGQGPPDEKNSSKTLSNEQIRYLQQRKDEPPIAISSTGNGGSVSSTGGSSGFLTFPSSNSLTHPPQRDKPTQEFTHLPPITSNYKGITNTGQPHKSFDQPLELFPRHSAFSNNGNNGNNNNNNNNNNIKANQQQQQQSSYQQSQTQQQQQHITSTSTSTTNKWIDPFGGWETQSSLSHPPSRPPPPPPPPPQLPVRSEYEIDFNELEFGQTIGKGFFGEVKRGYWRETDVAIKIIYRDQFKTKSSLVMFQNEVGILSKLRHPNVVQFLGACTAGGEDHHCIVTEWMGGGSLRQFLTDHFNLLEQNPHIRLKLALDIAKGMNYLHGWTPPILHRDLSSRNILLDHNIDPKNPVVSSRQDIKCKISDFGLSRLKMEQASQMTQSVGCIPYMAPEVFKGDSNSEKSDVYSYGMVLFELLTSDEPQQDMKPMKMAHLAAYESYRPPIPLTTSSKWKEILTQCWDSNPDSRPTFKQIIVHLKEMEDQGVSSFASVPVQTIDTGVYA</sequence>
<feature type="chain" id="PRO_0000088121" description="Dual specificity protein kinase splA">
    <location>
        <begin position="1"/>
        <end position="2410"/>
    </location>
</feature>
<feature type="domain" description="B30.2/SPRY 1" evidence="3">
    <location>
        <begin position="822"/>
        <end position="1004"/>
    </location>
</feature>
<feature type="domain" description="B30.2/SPRY 2" evidence="3">
    <location>
        <begin position="1020"/>
        <end position="1209"/>
    </location>
</feature>
<feature type="domain" description="B30.2/SPRY 3" evidence="3">
    <location>
        <begin position="1481"/>
        <end position="1703"/>
    </location>
</feature>
<feature type="domain" description="SAM" evidence="2">
    <location>
        <begin position="1734"/>
        <end position="1798"/>
    </location>
</feature>
<feature type="domain" description="Protein kinase" evidence="1">
    <location>
        <begin position="2115"/>
        <end position="2387"/>
    </location>
</feature>
<feature type="region of interest" description="Disordered" evidence="5">
    <location>
        <begin position="29"/>
        <end position="48"/>
    </location>
</feature>
<feature type="region of interest" description="Disordered" evidence="5">
    <location>
        <begin position="66"/>
        <end position="103"/>
    </location>
</feature>
<feature type="region of interest" description="Disordered" evidence="5">
    <location>
        <begin position="116"/>
        <end position="158"/>
    </location>
</feature>
<feature type="region of interest" description="Disordered" evidence="5">
    <location>
        <begin position="187"/>
        <end position="252"/>
    </location>
</feature>
<feature type="region of interest" description="Disordered" evidence="5">
    <location>
        <begin position="508"/>
        <end position="647"/>
    </location>
</feature>
<feature type="region of interest" description="Disordered" evidence="5">
    <location>
        <begin position="659"/>
        <end position="820"/>
    </location>
</feature>
<feature type="region of interest" description="Disordered" evidence="5">
    <location>
        <begin position="1228"/>
        <end position="1428"/>
    </location>
</feature>
<feature type="region of interest" description="Disordered" evidence="5">
    <location>
        <begin position="1493"/>
        <end position="1512"/>
    </location>
</feature>
<feature type="region of interest" description="Disordered" evidence="5">
    <location>
        <begin position="1862"/>
        <end position="2105"/>
    </location>
</feature>
<feature type="compositionally biased region" description="Low complexity" evidence="5">
    <location>
        <begin position="116"/>
        <end position="128"/>
    </location>
</feature>
<feature type="compositionally biased region" description="Low complexity" evidence="5">
    <location>
        <begin position="137"/>
        <end position="158"/>
    </location>
</feature>
<feature type="compositionally biased region" description="Pro residues" evidence="5">
    <location>
        <begin position="514"/>
        <end position="525"/>
    </location>
</feature>
<feature type="compositionally biased region" description="Low complexity" evidence="5">
    <location>
        <begin position="530"/>
        <end position="544"/>
    </location>
</feature>
<feature type="compositionally biased region" description="Polar residues" evidence="5">
    <location>
        <begin position="545"/>
        <end position="554"/>
    </location>
</feature>
<feature type="compositionally biased region" description="Low complexity" evidence="5">
    <location>
        <begin position="560"/>
        <end position="583"/>
    </location>
</feature>
<feature type="compositionally biased region" description="Pro residues" evidence="5">
    <location>
        <begin position="584"/>
        <end position="594"/>
    </location>
</feature>
<feature type="compositionally biased region" description="Low complexity" evidence="5">
    <location>
        <begin position="595"/>
        <end position="618"/>
    </location>
</feature>
<feature type="compositionally biased region" description="Low complexity" evidence="5">
    <location>
        <begin position="627"/>
        <end position="639"/>
    </location>
</feature>
<feature type="compositionally biased region" description="Low complexity" evidence="5">
    <location>
        <begin position="659"/>
        <end position="686"/>
    </location>
</feature>
<feature type="compositionally biased region" description="Low complexity" evidence="5">
    <location>
        <begin position="701"/>
        <end position="738"/>
    </location>
</feature>
<feature type="compositionally biased region" description="Low complexity" evidence="5">
    <location>
        <begin position="746"/>
        <end position="759"/>
    </location>
</feature>
<feature type="compositionally biased region" description="Low complexity" evidence="5">
    <location>
        <begin position="777"/>
        <end position="813"/>
    </location>
</feature>
<feature type="compositionally biased region" description="Low complexity" evidence="5">
    <location>
        <begin position="1229"/>
        <end position="1359"/>
    </location>
</feature>
<feature type="compositionally biased region" description="Low complexity" evidence="5">
    <location>
        <begin position="1373"/>
        <end position="1399"/>
    </location>
</feature>
<feature type="compositionally biased region" description="Low complexity" evidence="5">
    <location>
        <begin position="1419"/>
        <end position="1428"/>
    </location>
</feature>
<feature type="compositionally biased region" description="Low complexity" evidence="5">
    <location>
        <begin position="1493"/>
        <end position="1507"/>
    </location>
</feature>
<feature type="compositionally biased region" description="Basic and acidic residues" evidence="5">
    <location>
        <begin position="1865"/>
        <end position="1874"/>
    </location>
</feature>
<feature type="compositionally biased region" description="Low complexity" evidence="5">
    <location>
        <begin position="1951"/>
        <end position="1967"/>
    </location>
</feature>
<feature type="compositionally biased region" description="Polar residues" evidence="5">
    <location>
        <begin position="1989"/>
        <end position="2002"/>
    </location>
</feature>
<feature type="compositionally biased region" description="Low complexity" evidence="5">
    <location>
        <begin position="2020"/>
        <end position="2070"/>
    </location>
</feature>
<feature type="compositionally biased region" description="Pro residues" evidence="5">
    <location>
        <begin position="2089"/>
        <end position="2102"/>
    </location>
</feature>
<feature type="active site" description="Proton acceptor" evidence="1 4">
    <location>
        <position position="2243"/>
    </location>
</feature>
<feature type="binding site" evidence="1">
    <location>
        <begin position="2121"/>
        <end position="2129"/>
    </location>
    <ligand>
        <name>ATP</name>
        <dbReference type="ChEBI" id="CHEBI:30616"/>
    </ligand>
</feature>
<feature type="binding site" evidence="1">
    <location>
        <position position="2142"/>
    </location>
    <ligand>
        <name>ATP</name>
        <dbReference type="ChEBI" id="CHEBI:30616"/>
    </ligand>
</feature>
<feature type="sequence conflict" description="In Ref. 3; AAA33202." evidence="7" ref="3">
    <original>D</original>
    <variation>R</variation>
    <location>
        <position position="2074"/>
    </location>
</feature>
<feature type="sequence conflict" description="In Ref. 3; AAA33202." evidence="7" ref="3">
    <original>V</original>
    <variation>L</variation>
    <location>
        <position position="2261"/>
    </location>
</feature>
<feature type="sequence conflict" description="In Ref. 2; AAB41125 and 3; AAA33202." evidence="7" ref="2 3">
    <original>M</original>
    <variation>K</variation>
    <location>
        <position position="2282"/>
    </location>
</feature>
<reference key="1">
    <citation type="journal article" date="2005" name="Nature">
        <title>The genome of the social amoeba Dictyostelium discoideum.</title>
        <authorList>
            <person name="Eichinger L."/>
            <person name="Pachebat J.A."/>
            <person name="Gloeckner G."/>
            <person name="Rajandream M.A."/>
            <person name="Sucgang R."/>
            <person name="Berriman M."/>
            <person name="Song J."/>
            <person name="Olsen R."/>
            <person name="Szafranski K."/>
            <person name="Xu Q."/>
            <person name="Tunggal B."/>
            <person name="Kummerfeld S."/>
            <person name="Madera M."/>
            <person name="Konfortov B.A."/>
            <person name="Rivero F."/>
            <person name="Bankier A.T."/>
            <person name="Lehmann R."/>
            <person name="Hamlin N."/>
            <person name="Davies R."/>
            <person name="Gaudet P."/>
            <person name="Fey P."/>
            <person name="Pilcher K."/>
            <person name="Chen G."/>
            <person name="Saunders D."/>
            <person name="Sodergren E.J."/>
            <person name="Davis P."/>
            <person name="Kerhornou A."/>
            <person name="Nie X."/>
            <person name="Hall N."/>
            <person name="Anjard C."/>
            <person name="Hemphill L."/>
            <person name="Bason N."/>
            <person name="Farbrother P."/>
            <person name="Desany B."/>
            <person name="Just E."/>
            <person name="Morio T."/>
            <person name="Rost R."/>
            <person name="Churcher C.M."/>
            <person name="Cooper J."/>
            <person name="Haydock S."/>
            <person name="van Driessche N."/>
            <person name="Cronin A."/>
            <person name="Goodhead I."/>
            <person name="Muzny D.M."/>
            <person name="Mourier T."/>
            <person name="Pain A."/>
            <person name="Lu M."/>
            <person name="Harper D."/>
            <person name="Lindsay R."/>
            <person name="Hauser H."/>
            <person name="James K.D."/>
            <person name="Quiles M."/>
            <person name="Madan Babu M."/>
            <person name="Saito T."/>
            <person name="Buchrieser C."/>
            <person name="Wardroper A."/>
            <person name="Felder M."/>
            <person name="Thangavelu M."/>
            <person name="Johnson D."/>
            <person name="Knights A."/>
            <person name="Loulseged H."/>
            <person name="Mungall K.L."/>
            <person name="Oliver K."/>
            <person name="Price C."/>
            <person name="Quail M.A."/>
            <person name="Urushihara H."/>
            <person name="Hernandez J."/>
            <person name="Rabbinowitsch E."/>
            <person name="Steffen D."/>
            <person name="Sanders M."/>
            <person name="Ma J."/>
            <person name="Kohara Y."/>
            <person name="Sharp S."/>
            <person name="Simmonds M.N."/>
            <person name="Spiegler S."/>
            <person name="Tivey A."/>
            <person name="Sugano S."/>
            <person name="White B."/>
            <person name="Walker D."/>
            <person name="Woodward J.R."/>
            <person name="Winckler T."/>
            <person name="Tanaka Y."/>
            <person name="Shaulsky G."/>
            <person name="Schleicher M."/>
            <person name="Weinstock G.M."/>
            <person name="Rosenthal A."/>
            <person name="Cox E.C."/>
            <person name="Chisholm R.L."/>
            <person name="Gibbs R.A."/>
            <person name="Loomis W.F."/>
            <person name="Platzer M."/>
            <person name="Kay R.R."/>
            <person name="Williams J.G."/>
            <person name="Dear P.H."/>
            <person name="Noegel A.A."/>
            <person name="Barrell B.G."/>
            <person name="Kuspa A."/>
        </authorList>
    </citation>
    <scope>NUCLEOTIDE SEQUENCE [LARGE SCALE GENOMIC DNA]</scope>
    <source>
        <strain>AX4</strain>
    </source>
</reference>
<reference key="2">
    <citation type="journal article" date="1996" name="Development">
        <title>The Dictyostelium dual-specificity kinase splA is essential for spore differentiation.</title>
        <authorList>
            <person name="Nuckolls G.H."/>
            <person name="Osherov N."/>
            <person name="Loomis W.F."/>
            <person name="Spudich J.A."/>
        </authorList>
    </citation>
    <scope>NUCLEOTIDE SEQUENCE [GENOMIC DNA] OF 827-2410</scope>
    <scope>AUTOPHOSPHORYLATION</scope>
    <scope>DEVELOPMENTAL STAGE</scope>
    <source>
        <strain>JH10</strain>
    </source>
</reference>
<reference key="3">
    <citation type="journal article" date="1990" name="Mol. Cell. Biol.">
        <title>Developmentally regulated protein-tyrosine kinase genes in Dictyostelium discoideum.</title>
        <authorList>
            <person name="Tan J.L."/>
            <person name="Spudich J.A."/>
        </authorList>
    </citation>
    <scope>NUCLEOTIDE SEQUENCE [MRNA] OF 2074-2410</scope>
</reference>
<dbReference type="EC" id="2.7.10.2"/>
<dbReference type="EMBL" id="AAFI02000055">
    <property type="protein sequence ID" value="EAL65677.1"/>
    <property type="molecule type" value="Genomic_DNA"/>
</dbReference>
<dbReference type="EMBL" id="U32174">
    <property type="protein sequence ID" value="AAB41125.1"/>
    <property type="molecule type" value="Genomic_DNA"/>
</dbReference>
<dbReference type="EMBL" id="M33785">
    <property type="protein sequence ID" value="AAA33202.1"/>
    <property type="molecule type" value="mRNA"/>
</dbReference>
<dbReference type="PIR" id="T18276">
    <property type="entry name" value="T18276"/>
</dbReference>
<dbReference type="RefSeq" id="XP_639040.1">
    <property type="nucleotide sequence ID" value="XM_633948.1"/>
</dbReference>
<dbReference type="SMR" id="P18160"/>
<dbReference type="FunCoup" id="P18160">
    <property type="interactions" value="462"/>
</dbReference>
<dbReference type="STRING" id="44689.P18160"/>
<dbReference type="GlyGen" id="P18160">
    <property type="glycosylation" value="3 sites"/>
</dbReference>
<dbReference type="PaxDb" id="44689-DDB0252636"/>
<dbReference type="EnsemblProtists" id="EAL65677">
    <property type="protein sequence ID" value="EAL65677"/>
    <property type="gene ID" value="DDB_G0283385"/>
</dbReference>
<dbReference type="GeneID" id="8624065"/>
<dbReference type="KEGG" id="ddi:DDB_G0283385"/>
<dbReference type="dictyBase" id="DDB_G0283385">
    <property type="gene designation" value="splA"/>
</dbReference>
<dbReference type="VEuPathDB" id="AmoebaDB:DDB_G0283385"/>
<dbReference type="eggNOG" id="KOG0192">
    <property type="taxonomic scope" value="Eukaryota"/>
</dbReference>
<dbReference type="HOGENOM" id="CLU_229194_0_0_1"/>
<dbReference type="InParanoid" id="P18160"/>
<dbReference type="OMA" id="EIGEPYG"/>
<dbReference type="BRENDA" id="2.7.12.1">
    <property type="organism ID" value="1939"/>
</dbReference>
<dbReference type="Reactome" id="R-DDI-5675482">
    <property type="pathway name" value="Regulation of necroptotic cell death"/>
</dbReference>
<dbReference type="PRO" id="PR:P18160"/>
<dbReference type="Proteomes" id="UP000002195">
    <property type="component" value="Chromosome 4"/>
</dbReference>
<dbReference type="GO" id="GO:0005737">
    <property type="term" value="C:cytoplasm"/>
    <property type="evidence" value="ECO:0000318"/>
    <property type="project" value="GO_Central"/>
</dbReference>
<dbReference type="GO" id="GO:0005524">
    <property type="term" value="F:ATP binding"/>
    <property type="evidence" value="ECO:0007669"/>
    <property type="project" value="UniProtKB-KW"/>
</dbReference>
<dbReference type="GO" id="GO:0004715">
    <property type="term" value="F:non-membrane spanning protein tyrosine kinase activity"/>
    <property type="evidence" value="ECO:0007669"/>
    <property type="project" value="UniProtKB-EC"/>
</dbReference>
<dbReference type="GO" id="GO:0004672">
    <property type="term" value="F:protein kinase activity"/>
    <property type="evidence" value="ECO:0000318"/>
    <property type="project" value="GO_Central"/>
</dbReference>
<dbReference type="GO" id="GO:0004712">
    <property type="term" value="F:protein serine/threonine/tyrosine kinase activity"/>
    <property type="evidence" value="ECO:0000314"/>
    <property type="project" value="dictyBase"/>
</dbReference>
<dbReference type="GO" id="GO:0004713">
    <property type="term" value="F:protein tyrosine kinase activity"/>
    <property type="evidence" value="ECO:0000314"/>
    <property type="project" value="dictyBase"/>
</dbReference>
<dbReference type="GO" id="GO:0009653">
    <property type="term" value="P:anatomical structure morphogenesis"/>
    <property type="evidence" value="ECO:0000315"/>
    <property type="project" value="dictyBase"/>
</dbReference>
<dbReference type="GO" id="GO:0007165">
    <property type="term" value="P:signal transduction"/>
    <property type="evidence" value="ECO:0000318"/>
    <property type="project" value="GO_Central"/>
</dbReference>
<dbReference type="GO" id="GO:0030587">
    <property type="term" value="P:sorocarp development"/>
    <property type="evidence" value="ECO:0007001"/>
    <property type="project" value="dictyBase"/>
</dbReference>
<dbReference type="GO" id="GO:0030435">
    <property type="term" value="P:sporulation resulting in formation of a cellular spore"/>
    <property type="evidence" value="ECO:0000315"/>
    <property type="project" value="dictyBase"/>
</dbReference>
<dbReference type="CDD" id="cd12885">
    <property type="entry name" value="SPRY_RanBP_like"/>
    <property type="match status" value="3"/>
</dbReference>
<dbReference type="CDD" id="cd13999">
    <property type="entry name" value="STKc_MAP3K-like"/>
    <property type="match status" value="1"/>
</dbReference>
<dbReference type="FunFam" id="2.60.120.920:FF:000089">
    <property type="entry name" value="Dual specificity protein kinase splA"/>
    <property type="match status" value="1"/>
</dbReference>
<dbReference type="FunFam" id="1.10.510.10:FF:001915">
    <property type="entry name" value="Dual specificity protein kinase zak2"/>
    <property type="match status" value="1"/>
</dbReference>
<dbReference type="FunFam" id="3.30.200.20:FF:000034">
    <property type="entry name" value="Kinase suppressor of Ras 1"/>
    <property type="match status" value="1"/>
</dbReference>
<dbReference type="FunFam" id="2.60.120.920:FF:000092">
    <property type="entry name" value="Ran-binding protein M homolog"/>
    <property type="match status" value="1"/>
</dbReference>
<dbReference type="Gene3D" id="2.60.120.920">
    <property type="match status" value="3"/>
</dbReference>
<dbReference type="Gene3D" id="3.30.200.20">
    <property type="entry name" value="Phosphorylase Kinase, domain 1"/>
    <property type="match status" value="1"/>
</dbReference>
<dbReference type="Gene3D" id="1.10.150.50">
    <property type="entry name" value="Transcription Factor, Ets-1"/>
    <property type="match status" value="1"/>
</dbReference>
<dbReference type="Gene3D" id="1.10.510.10">
    <property type="entry name" value="Transferase(Phosphotransferase) domain 1"/>
    <property type="match status" value="1"/>
</dbReference>
<dbReference type="InterPro" id="IPR001870">
    <property type="entry name" value="B30.2/SPRY"/>
</dbReference>
<dbReference type="InterPro" id="IPR043136">
    <property type="entry name" value="B30.2/SPRY_sf"/>
</dbReference>
<dbReference type="InterPro" id="IPR013320">
    <property type="entry name" value="ConA-like_dom_sf"/>
</dbReference>
<dbReference type="InterPro" id="IPR011009">
    <property type="entry name" value="Kinase-like_dom_sf"/>
</dbReference>
<dbReference type="InterPro" id="IPR000719">
    <property type="entry name" value="Prot_kinase_dom"/>
</dbReference>
<dbReference type="InterPro" id="IPR017441">
    <property type="entry name" value="Protein_kinase_ATP_BS"/>
</dbReference>
<dbReference type="InterPro" id="IPR001660">
    <property type="entry name" value="SAM"/>
</dbReference>
<dbReference type="InterPro" id="IPR013761">
    <property type="entry name" value="SAM/pointed_sf"/>
</dbReference>
<dbReference type="InterPro" id="IPR001245">
    <property type="entry name" value="Ser-Thr/Tyr_kinase_cat_dom"/>
</dbReference>
<dbReference type="InterPro" id="IPR051681">
    <property type="entry name" value="Ser/Thr_Kinases-Pseudokinases"/>
</dbReference>
<dbReference type="InterPro" id="IPR003877">
    <property type="entry name" value="SPRY_dom"/>
</dbReference>
<dbReference type="InterPro" id="IPR008266">
    <property type="entry name" value="Tyr_kinase_AS"/>
</dbReference>
<dbReference type="InterPro" id="IPR044736">
    <property type="entry name" value="Vid30/RanBPM/SPLA_SPRY"/>
</dbReference>
<dbReference type="PANTHER" id="PTHR44329:SF298">
    <property type="entry name" value="MIXED LINEAGE KINASE DOMAIN-LIKE PROTEIN"/>
    <property type="match status" value="1"/>
</dbReference>
<dbReference type="PANTHER" id="PTHR44329">
    <property type="entry name" value="SERINE/THREONINE-PROTEIN KINASE TNNI3K-RELATED"/>
    <property type="match status" value="1"/>
</dbReference>
<dbReference type="Pfam" id="PF07714">
    <property type="entry name" value="PK_Tyr_Ser-Thr"/>
    <property type="match status" value="1"/>
</dbReference>
<dbReference type="Pfam" id="PF07647">
    <property type="entry name" value="SAM_2"/>
    <property type="match status" value="1"/>
</dbReference>
<dbReference type="Pfam" id="PF00622">
    <property type="entry name" value="SPRY"/>
    <property type="match status" value="3"/>
</dbReference>
<dbReference type="SMART" id="SM00454">
    <property type="entry name" value="SAM"/>
    <property type="match status" value="1"/>
</dbReference>
<dbReference type="SMART" id="SM00449">
    <property type="entry name" value="SPRY"/>
    <property type="match status" value="3"/>
</dbReference>
<dbReference type="SUPFAM" id="SSF49899">
    <property type="entry name" value="Concanavalin A-like lectins/glucanases"/>
    <property type="match status" value="3"/>
</dbReference>
<dbReference type="SUPFAM" id="SSF56112">
    <property type="entry name" value="Protein kinase-like (PK-like)"/>
    <property type="match status" value="1"/>
</dbReference>
<dbReference type="SUPFAM" id="SSF47769">
    <property type="entry name" value="SAM/Pointed domain"/>
    <property type="match status" value="1"/>
</dbReference>
<dbReference type="PROSITE" id="PS50188">
    <property type="entry name" value="B302_SPRY"/>
    <property type="match status" value="3"/>
</dbReference>
<dbReference type="PROSITE" id="PS00107">
    <property type="entry name" value="PROTEIN_KINASE_ATP"/>
    <property type="match status" value="1"/>
</dbReference>
<dbReference type="PROSITE" id="PS50011">
    <property type="entry name" value="PROTEIN_KINASE_DOM"/>
    <property type="match status" value="1"/>
</dbReference>
<dbReference type="PROSITE" id="PS00109">
    <property type="entry name" value="PROTEIN_KINASE_TYR"/>
    <property type="match status" value="1"/>
</dbReference>
<dbReference type="PROSITE" id="PS50105">
    <property type="entry name" value="SAM_DOMAIN"/>
    <property type="match status" value="1"/>
</dbReference>
<organism>
    <name type="scientific">Dictyostelium discoideum</name>
    <name type="common">Social amoeba</name>
    <dbReference type="NCBI Taxonomy" id="44689"/>
    <lineage>
        <taxon>Eukaryota</taxon>
        <taxon>Amoebozoa</taxon>
        <taxon>Evosea</taxon>
        <taxon>Eumycetozoa</taxon>
        <taxon>Dictyostelia</taxon>
        <taxon>Dictyosteliales</taxon>
        <taxon>Dictyosteliaceae</taxon>
        <taxon>Dictyostelium</taxon>
    </lineage>
</organism>
<proteinExistence type="evidence at protein level"/>
<gene>
    <name type="primary">splA</name>
    <name type="synonym">DpyK1</name>
    <name type="synonym">pyK1</name>
    <name type="synonym">pykA</name>
    <name type="ORF">DDB_G0283385</name>
</gene>
<comment type="function">
    <text>Essential for spore differentiation.</text>
</comment>
<comment type="catalytic activity">
    <reaction evidence="4">
        <text>L-tyrosyl-[protein] + ATP = O-phospho-L-tyrosyl-[protein] + ADP + H(+)</text>
        <dbReference type="Rhea" id="RHEA:10596"/>
        <dbReference type="Rhea" id="RHEA-COMP:10136"/>
        <dbReference type="Rhea" id="RHEA-COMP:20101"/>
        <dbReference type="ChEBI" id="CHEBI:15378"/>
        <dbReference type="ChEBI" id="CHEBI:30616"/>
        <dbReference type="ChEBI" id="CHEBI:46858"/>
        <dbReference type="ChEBI" id="CHEBI:61978"/>
        <dbReference type="ChEBI" id="CHEBI:456216"/>
        <dbReference type="EC" id="2.7.10.2"/>
    </reaction>
</comment>
<comment type="developmental stage">
    <text evidence="6">Expressed in vegetative cells and throughout development with a peak during the mound stage of morphogenesis.</text>
</comment>
<comment type="PTM">
    <text>Tyrosine kinase domain is capable of autophosphorylation, in vitro; however it is also autophosphorylated on serine and threonine residues.</text>
</comment>
<comment type="similarity">
    <text evidence="7">Belongs to the protein kinase superfamily. TKL Tyr protein kinase family.</text>
</comment>